<proteinExistence type="inferred from homology"/>
<feature type="chain" id="PRO_1000006799" description="Phenylalanine--tRNA ligase alpha subunit">
    <location>
        <begin position="1"/>
        <end position="344"/>
    </location>
</feature>
<feature type="binding site" evidence="1">
    <location>
        <position position="255"/>
    </location>
    <ligand>
        <name>Mg(2+)</name>
        <dbReference type="ChEBI" id="CHEBI:18420"/>
        <note>shared with beta subunit</note>
    </ligand>
</feature>
<gene>
    <name evidence="1" type="primary">pheS</name>
    <name type="ordered locus">BVU_2237</name>
</gene>
<dbReference type="EC" id="6.1.1.20" evidence="1"/>
<dbReference type="EMBL" id="CP000139">
    <property type="protein sequence ID" value="ABR39897.1"/>
    <property type="molecule type" value="Genomic_DNA"/>
</dbReference>
<dbReference type="RefSeq" id="WP_005846037.1">
    <property type="nucleotide sequence ID" value="NZ_JANSWM010000089.1"/>
</dbReference>
<dbReference type="SMR" id="A6L2I3"/>
<dbReference type="STRING" id="435590.BVU_2237"/>
<dbReference type="PaxDb" id="435590-BVU_2237"/>
<dbReference type="GeneID" id="5303201"/>
<dbReference type="KEGG" id="bvu:BVU_2237"/>
<dbReference type="eggNOG" id="COG0016">
    <property type="taxonomic scope" value="Bacteria"/>
</dbReference>
<dbReference type="HOGENOM" id="CLU_025086_0_1_10"/>
<dbReference type="BioCyc" id="BVUL435590:G1G59-2328-MONOMER"/>
<dbReference type="Proteomes" id="UP000002861">
    <property type="component" value="Chromosome"/>
</dbReference>
<dbReference type="GO" id="GO:0005737">
    <property type="term" value="C:cytoplasm"/>
    <property type="evidence" value="ECO:0007669"/>
    <property type="project" value="UniProtKB-SubCell"/>
</dbReference>
<dbReference type="GO" id="GO:0005524">
    <property type="term" value="F:ATP binding"/>
    <property type="evidence" value="ECO:0007669"/>
    <property type="project" value="UniProtKB-UniRule"/>
</dbReference>
<dbReference type="GO" id="GO:0000287">
    <property type="term" value="F:magnesium ion binding"/>
    <property type="evidence" value="ECO:0007669"/>
    <property type="project" value="UniProtKB-UniRule"/>
</dbReference>
<dbReference type="GO" id="GO:0004826">
    <property type="term" value="F:phenylalanine-tRNA ligase activity"/>
    <property type="evidence" value="ECO:0007669"/>
    <property type="project" value="UniProtKB-UniRule"/>
</dbReference>
<dbReference type="GO" id="GO:0000049">
    <property type="term" value="F:tRNA binding"/>
    <property type="evidence" value="ECO:0007669"/>
    <property type="project" value="InterPro"/>
</dbReference>
<dbReference type="GO" id="GO:0006432">
    <property type="term" value="P:phenylalanyl-tRNA aminoacylation"/>
    <property type="evidence" value="ECO:0007669"/>
    <property type="project" value="UniProtKB-UniRule"/>
</dbReference>
<dbReference type="CDD" id="cd00496">
    <property type="entry name" value="PheRS_alpha_core"/>
    <property type="match status" value="1"/>
</dbReference>
<dbReference type="FunFam" id="3.30.930.10:FF:000003">
    <property type="entry name" value="Phenylalanine--tRNA ligase alpha subunit"/>
    <property type="match status" value="1"/>
</dbReference>
<dbReference type="Gene3D" id="3.30.930.10">
    <property type="entry name" value="Bira Bifunctional Protein, Domain 2"/>
    <property type="match status" value="1"/>
</dbReference>
<dbReference type="HAMAP" id="MF_00281">
    <property type="entry name" value="Phe_tRNA_synth_alpha1"/>
    <property type="match status" value="1"/>
</dbReference>
<dbReference type="InterPro" id="IPR006195">
    <property type="entry name" value="aa-tRNA-synth_II"/>
</dbReference>
<dbReference type="InterPro" id="IPR045864">
    <property type="entry name" value="aa-tRNA-synth_II/BPL/LPL"/>
</dbReference>
<dbReference type="InterPro" id="IPR004529">
    <property type="entry name" value="Phe-tRNA-synth_IIc_asu"/>
</dbReference>
<dbReference type="InterPro" id="IPR004188">
    <property type="entry name" value="Phe-tRNA_ligase_II_N"/>
</dbReference>
<dbReference type="InterPro" id="IPR022911">
    <property type="entry name" value="Phe_tRNA_ligase_alpha1_bac"/>
</dbReference>
<dbReference type="InterPro" id="IPR002319">
    <property type="entry name" value="Phenylalanyl-tRNA_Synthase"/>
</dbReference>
<dbReference type="InterPro" id="IPR010978">
    <property type="entry name" value="tRNA-bd_arm"/>
</dbReference>
<dbReference type="NCBIfam" id="TIGR00468">
    <property type="entry name" value="pheS"/>
    <property type="match status" value="1"/>
</dbReference>
<dbReference type="PANTHER" id="PTHR11538:SF41">
    <property type="entry name" value="PHENYLALANINE--TRNA LIGASE, MITOCHONDRIAL"/>
    <property type="match status" value="1"/>
</dbReference>
<dbReference type="PANTHER" id="PTHR11538">
    <property type="entry name" value="PHENYLALANYL-TRNA SYNTHETASE"/>
    <property type="match status" value="1"/>
</dbReference>
<dbReference type="Pfam" id="PF02912">
    <property type="entry name" value="Phe_tRNA-synt_N"/>
    <property type="match status" value="1"/>
</dbReference>
<dbReference type="Pfam" id="PF01409">
    <property type="entry name" value="tRNA-synt_2d"/>
    <property type="match status" value="1"/>
</dbReference>
<dbReference type="SUPFAM" id="SSF55681">
    <property type="entry name" value="Class II aaRS and biotin synthetases"/>
    <property type="match status" value="1"/>
</dbReference>
<dbReference type="SUPFAM" id="SSF46589">
    <property type="entry name" value="tRNA-binding arm"/>
    <property type="match status" value="1"/>
</dbReference>
<dbReference type="PROSITE" id="PS50862">
    <property type="entry name" value="AA_TRNA_LIGASE_II"/>
    <property type="match status" value="1"/>
</dbReference>
<organism>
    <name type="scientific">Phocaeicola vulgatus (strain ATCC 8482 / DSM 1447 / JCM 5826 / CCUG 4940 / NBRC 14291 / NCTC 11154)</name>
    <name type="common">Bacteroides vulgatus</name>
    <dbReference type="NCBI Taxonomy" id="435590"/>
    <lineage>
        <taxon>Bacteria</taxon>
        <taxon>Pseudomonadati</taxon>
        <taxon>Bacteroidota</taxon>
        <taxon>Bacteroidia</taxon>
        <taxon>Bacteroidales</taxon>
        <taxon>Bacteroidaceae</taxon>
        <taxon>Phocaeicola</taxon>
    </lineage>
</organism>
<sequence>MLAKIEQLLQEIEGLQAANAEELEALRIKYLSKKGAINELMADFRNVPAEQKKEVGMKLNELKNKAQERIASLKEAFETQDNSAAEMDLTRTAYPIELGTRHPLSIVKNEIIDIFHRLGFSIADGPEIEDDLHVFTAMNFAEDHPARDMQDTFFIEANQEDVKKNIVLRTHTSSVQARAMEHSQPPIRIICPGRVYRNEAISYRAHAFFHQVEALYIDKNVSFTDLKQVLLLFAKEMFGEDTQIRLRPSYFPFTEPSAEMDISCNICGGKGCPFCKGTGWVEILGCGMVDPNVLEANGIDSKVYSGYALGMGIERITNLKYRVNDLRLFSENDTRFLKEFEAAN</sequence>
<evidence type="ECO:0000255" key="1">
    <source>
        <dbReference type="HAMAP-Rule" id="MF_00281"/>
    </source>
</evidence>
<name>SYFA_PHOV8</name>
<keyword id="KW-0030">Aminoacyl-tRNA synthetase</keyword>
<keyword id="KW-0067">ATP-binding</keyword>
<keyword id="KW-0963">Cytoplasm</keyword>
<keyword id="KW-0436">Ligase</keyword>
<keyword id="KW-0460">Magnesium</keyword>
<keyword id="KW-0479">Metal-binding</keyword>
<keyword id="KW-0547">Nucleotide-binding</keyword>
<keyword id="KW-0648">Protein biosynthesis</keyword>
<protein>
    <recommendedName>
        <fullName evidence="1">Phenylalanine--tRNA ligase alpha subunit</fullName>
        <ecNumber evidence="1">6.1.1.20</ecNumber>
    </recommendedName>
    <alternativeName>
        <fullName evidence="1">Phenylalanyl-tRNA synthetase alpha subunit</fullName>
        <shortName evidence="1">PheRS</shortName>
    </alternativeName>
</protein>
<accession>A6L2I3</accession>
<reference key="1">
    <citation type="journal article" date="2007" name="PLoS Biol.">
        <title>Evolution of symbiotic bacteria in the distal human intestine.</title>
        <authorList>
            <person name="Xu J."/>
            <person name="Mahowald M.A."/>
            <person name="Ley R.E."/>
            <person name="Lozupone C.A."/>
            <person name="Hamady M."/>
            <person name="Martens E.C."/>
            <person name="Henrissat B."/>
            <person name="Coutinho P.M."/>
            <person name="Minx P."/>
            <person name="Latreille P."/>
            <person name="Cordum H."/>
            <person name="Van Brunt A."/>
            <person name="Kim K."/>
            <person name="Fulton R.S."/>
            <person name="Fulton L.A."/>
            <person name="Clifton S.W."/>
            <person name="Wilson R.K."/>
            <person name="Knight R.D."/>
            <person name="Gordon J.I."/>
        </authorList>
    </citation>
    <scope>NUCLEOTIDE SEQUENCE [LARGE SCALE GENOMIC DNA]</scope>
    <source>
        <strain>ATCC 8482 / DSM 1447 / JCM 5826 / CCUG 4940 / NBRC 14291 / NCTC 11154</strain>
    </source>
</reference>
<comment type="catalytic activity">
    <reaction evidence="1">
        <text>tRNA(Phe) + L-phenylalanine + ATP = L-phenylalanyl-tRNA(Phe) + AMP + diphosphate + H(+)</text>
        <dbReference type="Rhea" id="RHEA:19413"/>
        <dbReference type="Rhea" id="RHEA-COMP:9668"/>
        <dbReference type="Rhea" id="RHEA-COMP:9699"/>
        <dbReference type="ChEBI" id="CHEBI:15378"/>
        <dbReference type="ChEBI" id="CHEBI:30616"/>
        <dbReference type="ChEBI" id="CHEBI:33019"/>
        <dbReference type="ChEBI" id="CHEBI:58095"/>
        <dbReference type="ChEBI" id="CHEBI:78442"/>
        <dbReference type="ChEBI" id="CHEBI:78531"/>
        <dbReference type="ChEBI" id="CHEBI:456215"/>
        <dbReference type="EC" id="6.1.1.20"/>
    </reaction>
</comment>
<comment type="cofactor">
    <cofactor evidence="1">
        <name>Mg(2+)</name>
        <dbReference type="ChEBI" id="CHEBI:18420"/>
    </cofactor>
    <text evidence="1">Binds 2 magnesium ions per tetramer.</text>
</comment>
<comment type="subunit">
    <text evidence="1">Tetramer of two alpha and two beta subunits.</text>
</comment>
<comment type="subcellular location">
    <subcellularLocation>
        <location evidence="1">Cytoplasm</location>
    </subcellularLocation>
</comment>
<comment type="similarity">
    <text evidence="1">Belongs to the class-II aminoacyl-tRNA synthetase family. Phe-tRNA synthetase alpha subunit type 1 subfamily.</text>
</comment>